<comment type="function">
    <text evidence="1">Binds 16S rRNA, required for the assembly of 30S particles and may also be responsible for determining the conformation of the 16S rRNA at the A site.</text>
</comment>
<comment type="cofactor">
    <cofactor evidence="1">
        <name>Zn(2+)</name>
        <dbReference type="ChEBI" id="CHEBI:29105"/>
    </cofactor>
    <text evidence="1">Binds 1 zinc ion per subunit.</text>
</comment>
<comment type="subunit">
    <text evidence="1">Part of the 30S ribosomal subunit. Contacts proteins S3 and S10.</text>
</comment>
<comment type="similarity">
    <text evidence="1">Belongs to the universal ribosomal protein uS14 family. Zinc-binding uS14 subfamily.</text>
</comment>
<name>RS14Z_STRPD</name>
<keyword id="KW-0479">Metal-binding</keyword>
<keyword id="KW-0687">Ribonucleoprotein</keyword>
<keyword id="KW-0689">Ribosomal protein</keyword>
<keyword id="KW-0694">RNA-binding</keyword>
<keyword id="KW-0699">rRNA-binding</keyword>
<keyword id="KW-0862">Zinc</keyword>
<reference key="1">
    <citation type="journal article" date="2006" name="Proc. Natl. Acad. Sci. U.S.A.">
        <title>Molecular genetic anatomy of inter- and intraserotype variation in the human bacterial pathogen group A Streptococcus.</title>
        <authorList>
            <person name="Beres S.B."/>
            <person name="Richter E.W."/>
            <person name="Nagiec M.J."/>
            <person name="Sumby P."/>
            <person name="Porcella S.F."/>
            <person name="DeLeo F.R."/>
            <person name="Musser J.M."/>
        </authorList>
    </citation>
    <scope>NUCLEOTIDE SEQUENCE [LARGE SCALE GENOMIC DNA]</scope>
    <source>
        <strain>MGAS10270</strain>
    </source>
</reference>
<proteinExistence type="inferred from homology"/>
<gene>
    <name evidence="1" type="primary">rpsZ</name>
    <name evidence="1" type="synonym">rpsN1</name>
    <name type="ordered locus">MGAS10270_Spy0059</name>
</gene>
<evidence type="ECO:0000255" key="1">
    <source>
        <dbReference type="HAMAP-Rule" id="MF_01364"/>
    </source>
</evidence>
<evidence type="ECO:0000305" key="2"/>
<dbReference type="EMBL" id="CP000260">
    <property type="protein sequence ID" value="ABF33124.1"/>
    <property type="molecule type" value="Genomic_DNA"/>
</dbReference>
<dbReference type="RefSeq" id="WP_002987746.1">
    <property type="nucleotide sequence ID" value="NZ_CVUH01000001.1"/>
</dbReference>
<dbReference type="SMR" id="Q1JJ49"/>
<dbReference type="KEGG" id="sph:MGAS10270_Spy0059"/>
<dbReference type="HOGENOM" id="CLU_139869_3_0_9"/>
<dbReference type="Proteomes" id="UP000002436">
    <property type="component" value="Chromosome"/>
</dbReference>
<dbReference type="GO" id="GO:0015935">
    <property type="term" value="C:small ribosomal subunit"/>
    <property type="evidence" value="ECO:0007669"/>
    <property type="project" value="TreeGrafter"/>
</dbReference>
<dbReference type="GO" id="GO:0019843">
    <property type="term" value="F:rRNA binding"/>
    <property type="evidence" value="ECO:0007669"/>
    <property type="project" value="UniProtKB-UniRule"/>
</dbReference>
<dbReference type="GO" id="GO:0003735">
    <property type="term" value="F:structural constituent of ribosome"/>
    <property type="evidence" value="ECO:0007669"/>
    <property type="project" value="InterPro"/>
</dbReference>
<dbReference type="GO" id="GO:0008270">
    <property type="term" value="F:zinc ion binding"/>
    <property type="evidence" value="ECO:0007669"/>
    <property type="project" value="UniProtKB-UniRule"/>
</dbReference>
<dbReference type="GO" id="GO:0006412">
    <property type="term" value="P:translation"/>
    <property type="evidence" value="ECO:0007669"/>
    <property type="project" value="UniProtKB-UniRule"/>
</dbReference>
<dbReference type="FunFam" id="4.10.830.10:FF:000001">
    <property type="entry name" value="30S ribosomal protein S14 type Z"/>
    <property type="match status" value="1"/>
</dbReference>
<dbReference type="Gene3D" id="4.10.830.10">
    <property type="entry name" value="30s Ribosomal Protein S14, Chain N"/>
    <property type="match status" value="1"/>
</dbReference>
<dbReference type="HAMAP" id="MF_01364_B">
    <property type="entry name" value="Ribosomal_uS14_2_B"/>
    <property type="match status" value="1"/>
</dbReference>
<dbReference type="InterPro" id="IPR001209">
    <property type="entry name" value="Ribosomal_uS14"/>
</dbReference>
<dbReference type="InterPro" id="IPR023053">
    <property type="entry name" value="Ribosomal_uS14_bact"/>
</dbReference>
<dbReference type="InterPro" id="IPR018271">
    <property type="entry name" value="Ribosomal_uS14_CS"/>
</dbReference>
<dbReference type="InterPro" id="IPR043140">
    <property type="entry name" value="Ribosomal_uS14_sf"/>
</dbReference>
<dbReference type="NCBIfam" id="NF005974">
    <property type="entry name" value="PRK08061.1"/>
    <property type="match status" value="1"/>
</dbReference>
<dbReference type="PANTHER" id="PTHR19836">
    <property type="entry name" value="30S RIBOSOMAL PROTEIN S14"/>
    <property type="match status" value="1"/>
</dbReference>
<dbReference type="PANTHER" id="PTHR19836:SF26">
    <property type="entry name" value="SMALL RIBOSOMAL SUBUNIT PROTEIN US14B"/>
    <property type="match status" value="1"/>
</dbReference>
<dbReference type="Pfam" id="PF00253">
    <property type="entry name" value="Ribosomal_S14"/>
    <property type="match status" value="1"/>
</dbReference>
<dbReference type="SUPFAM" id="SSF57716">
    <property type="entry name" value="Glucocorticoid receptor-like (DNA-binding domain)"/>
    <property type="match status" value="1"/>
</dbReference>
<dbReference type="PROSITE" id="PS00527">
    <property type="entry name" value="RIBOSOMAL_S14"/>
    <property type="match status" value="1"/>
</dbReference>
<sequence length="61" mass="7073">MAKKSMIAKNKRPAKHSTQAYTRCEKCGRPHSVYRKFKLCRVCFRELAYKGQIPGVVKASW</sequence>
<protein>
    <recommendedName>
        <fullName evidence="1">Small ribosomal subunit protein uS14B</fullName>
    </recommendedName>
    <alternativeName>
        <fullName evidence="2">30S ribosomal protein S14 type Z</fullName>
    </alternativeName>
</protein>
<accession>Q1JJ49</accession>
<organism>
    <name type="scientific">Streptococcus pyogenes serotype M2 (strain MGAS10270)</name>
    <dbReference type="NCBI Taxonomy" id="370552"/>
    <lineage>
        <taxon>Bacteria</taxon>
        <taxon>Bacillati</taxon>
        <taxon>Bacillota</taxon>
        <taxon>Bacilli</taxon>
        <taxon>Lactobacillales</taxon>
        <taxon>Streptococcaceae</taxon>
        <taxon>Streptococcus</taxon>
    </lineage>
</organism>
<feature type="chain" id="PRO_0000269146" description="Small ribosomal subunit protein uS14B">
    <location>
        <begin position="1"/>
        <end position="61"/>
    </location>
</feature>
<feature type="binding site" evidence="1">
    <location>
        <position position="24"/>
    </location>
    <ligand>
        <name>Zn(2+)</name>
        <dbReference type="ChEBI" id="CHEBI:29105"/>
    </ligand>
</feature>
<feature type="binding site" evidence="1">
    <location>
        <position position="27"/>
    </location>
    <ligand>
        <name>Zn(2+)</name>
        <dbReference type="ChEBI" id="CHEBI:29105"/>
    </ligand>
</feature>
<feature type="binding site" evidence="1">
    <location>
        <position position="40"/>
    </location>
    <ligand>
        <name>Zn(2+)</name>
        <dbReference type="ChEBI" id="CHEBI:29105"/>
    </ligand>
</feature>
<feature type="binding site" evidence="1">
    <location>
        <position position="43"/>
    </location>
    <ligand>
        <name>Zn(2+)</name>
        <dbReference type="ChEBI" id="CHEBI:29105"/>
    </ligand>
</feature>